<protein>
    <recommendedName>
        <fullName evidence="1">S-ribosylhomocysteine lyase</fullName>
        <ecNumber evidence="1">4.4.1.21</ecNumber>
    </recommendedName>
    <alternativeName>
        <fullName evidence="1">AI-2 synthesis protein</fullName>
    </alternativeName>
    <alternativeName>
        <fullName evidence="1">Autoinducer-2 production protein LuxS</fullName>
    </alternativeName>
</protein>
<gene>
    <name evidence="1" type="primary">luxS</name>
</gene>
<name>LUXS_LIMRT</name>
<evidence type="ECO:0000255" key="1">
    <source>
        <dbReference type="HAMAP-Rule" id="MF_00091"/>
    </source>
</evidence>
<sequence length="158" mass="17727">MAKVESFTLDHTKVKAPYVRLITVEEGAKGDKISNYDLRLVQPNENAIPTAGLHTIEHLLAGLLRDRLDGVIDCSPFGCRTGFHLITWGEHSTTEVAKALKSSLEEIAYKTKWEDVQGTTIESCGNYRDHSLFSAKEWSKKILDEGISDKPFERHVVD</sequence>
<reference key="1">
    <citation type="submission" date="2003-11" db="EMBL/GenBank/DDBJ databases">
        <title>LuxS sequence of Lactobacillus reuteri 100-23.</title>
        <authorList>
            <person name="Ghazally S."/>
            <person name="Walter J."/>
            <person name="Tannock G.W."/>
        </authorList>
    </citation>
    <scope>NUCLEOTIDE SEQUENCE [GENOMIC DNA]</scope>
    <source>
        <strain>100-23</strain>
    </source>
</reference>
<proteinExistence type="inferred from homology"/>
<dbReference type="EC" id="4.4.1.21" evidence="1"/>
<dbReference type="EMBL" id="AY485153">
    <property type="protein sequence ID" value="AAS48489.1"/>
    <property type="molecule type" value="Genomic_DNA"/>
</dbReference>
<dbReference type="RefSeq" id="WP_003664767.1">
    <property type="nucleotide sequence ID" value="NZ_WJNC01000003.1"/>
</dbReference>
<dbReference type="SMR" id="Q5QHW1"/>
<dbReference type="OrthoDB" id="9788129at2"/>
<dbReference type="BRENDA" id="4.4.1.21">
    <property type="organism ID" value="2890"/>
</dbReference>
<dbReference type="GO" id="GO:0005506">
    <property type="term" value="F:iron ion binding"/>
    <property type="evidence" value="ECO:0007669"/>
    <property type="project" value="InterPro"/>
</dbReference>
<dbReference type="GO" id="GO:0043768">
    <property type="term" value="F:S-ribosylhomocysteine lyase activity"/>
    <property type="evidence" value="ECO:0007669"/>
    <property type="project" value="UniProtKB-UniRule"/>
</dbReference>
<dbReference type="GO" id="GO:0009372">
    <property type="term" value="P:quorum sensing"/>
    <property type="evidence" value="ECO:0007669"/>
    <property type="project" value="UniProtKB-UniRule"/>
</dbReference>
<dbReference type="Gene3D" id="3.30.1360.80">
    <property type="entry name" value="S-ribosylhomocysteinase (LuxS)"/>
    <property type="match status" value="1"/>
</dbReference>
<dbReference type="HAMAP" id="MF_00091">
    <property type="entry name" value="LuxS"/>
    <property type="match status" value="1"/>
</dbReference>
<dbReference type="InterPro" id="IPR037005">
    <property type="entry name" value="LuxS_sf"/>
</dbReference>
<dbReference type="InterPro" id="IPR011249">
    <property type="entry name" value="Metalloenz_LuxS/M16"/>
</dbReference>
<dbReference type="InterPro" id="IPR003815">
    <property type="entry name" value="S-ribosylhomocysteinase"/>
</dbReference>
<dbReference type="NCBIfam" id="NF002606">
    <property type="entry name" value="PRK02260.2-4"/>
    <property type="match status" value="1"/>
</dbReference>
<dbReference type="NCBIfam" id="NF002608">
    <property type="entry name" value="PRK02260.3-1"/>
    <property type="match status" value="1"/>
</dbReference>
<dbReference type="PANTHER" id="PTHR35799">
    <property type="entry name" value="S-RIBOSYLHOMOCYSTEINE LYASE"/>
    <property type="match status" value="1"/>
</dbReference>
<dbReference type="PANTHER" id="PTHR35799:SF1">
    <property type="entry name" value="S-RIBOSYLHOMOCYSTEINE LYASE"/>
    <property type="match status" value="1"/>
</dbReference>
<dbReference type="Pfam" id="PF02664">
    <property type="entry name" value="LuxS"/>
    <property type="match status" value="1"/>
</dbReference>
<dbReference type="PIRSF" id="PIRSF006160">
    <property type="entry name" value="AI2"/>
    <property type="match status" value="1"/>
</dbReference>
<dbReference type="PRINTS" id="PR01487">
    <property type="entry name" value="LUXSPROTEIN"/>
</dbReference>
<dbReference type="SUPFAM" id="SSF63411">
    <property type="entry name" value="LuxS/MPP-like metallohydrolase"/>
    <property type="match status" value="1"/>
</dbReference>
<keyword id="KW-0071">Autoinducer synthesis</keyword>
<keyword id="KW-0408">Iron</keyword>
<keyword id="KW-0456">Lyase</keyword>
<keyword id="KW-0479">Metal-binding</keyword>
<keyword id="KW-0673">Quorum sensing</keyword>
<comment type="function">
    <text evidence="1">Involved in the synthesis of autoinducer 2 (AI-2) which is secreted by bacteria and is used to communicate both the cell density and the metabolic potential of the environment. The regulation of gene expression in response to changes in cell density is called quorum sensing. Catalyzes the transformation of S-ribosylhomocysteine (RHC) to homocysteine (HC) and 4,5-dihydroxy-2,3-pentadione (DPD).</text>
</comment>
<comment type="catalytic activity">
    <reaction evidence="1">
        <text>S-(5-deoxy-D-ribos-5-yl)-L-homocysteine = (S)-4,5-dihydroxypentane-2,3-dione + L-homocysteine</text>
        <dbReference type="Rhea" id="RHEA:17753"/>
        <dbReference type="ChEBI" id="CHEBI:29484"/>
        <dbReference type="ChEBI" id="CHEBI:58195"/>
        <dbReference type="ChEBI" id="CHEBI:58199"/>
        <dbReference type="EC" id="4.4.1.21"/>
    </reaction>
</comment>
<comment type="cofactor">
    <cofactor evidence="1">
        <name>Fe cation</name>
        <dbReference type="ChEBI" id="CHEBI:24875"/>
    </cofactor>
    <text evidence="1">Binds 1 Fe cation per subunit.</text>
</comment>
<comment type="subunit">
    <text evidence="1">Homodimer.</text>
</comment>
<comment type="similarity">
    <text evidence="1">Belongs to the LuxS family.</text>
</comment>
<organism>
    <name type="scientific">Limosilactobacillus reuteri</name>
    <name type="common">Lactobacillus reuteri</name>
    <dbReference type="NCBI Taxonomy" id="1598"/>
    <lineage>
        <taxon>Bacteria</taxon>
        <taxon>Bacillati</taxon>
        <taxon>Bacillota</taxon>
        <taxon>Bacilli</taxon>
        <taxon>Lactobacillales</taxon>
        <taxon>Lactobacillaceae</taxon>
        <taxon>Limosilactobacillus</taxon>
    </lineage>
</organism>
<accession>Q5QHW1</accession>
<feature type="chain" id="PRO_0000172234" description="S-ribosylhomocysteine lyase">
    <location>
        <begin position="1"/>
        <end position="158"/>
    </location>
</feature>
<feature type="binding site" evidence="1">
    <location>
        <position position="54"/>
    </location>
    <ligand>
        <name>Fe cation</name>
        <dbReference type="ChEBI" id="CHEBI:24875"/>
    </ligand>
</feature>
<feature type="binding site" evidence="1">
    <location>
        <position position="58"/>
    </location>
    <ligand>
        <name>Fe cation</name>
        <dbReference type="ChEBI" id="CHEBI:24875"/>
    </ligand>
</feature>
<feature type="binding site" evidence="1">
    <location>
        <position position="124"/>
    </location>
    <ligand>
        <name>Fe cation</name>
        <dbReference type="ChEBI" id="CHEBI:24875"/>
    </ligand>
</feature>